<reference key="1">
    <citation type="journal article" date="1998" name="Nature">
        <title>Deciphering the biology of Mycobacterium tuberculosis from the complete genome sequence.</title>
        <authorList>
            <person name="Cole S.T."/>
            <person name="Brosch R."/>
            <person name="Parkhill J."/>
            <person name="Garnier T."/>
            <person name="Churcher C.M."/>
            <person name="Harris D.E."/>
            <person name="Gordon S.V."/>
            <person name="Eiglmeier K."/>
            <person name="Gas S."/>
            <person name="Barry C.E. III"/>
            <person name="Tekaia F."/>
            <person name="Badcock K."/>
            <person name="Basham D."/>
            <person name="Brown D."/>
            <person name="Chillingworth T."/>
            <person name="Connor R."/>
            <person name="Davies R.M."/>
            <person name="Devlin K."/>
            <person name="Feltwell T."/>
            <person name="Gentles S."/>
            <person name="Hamlin N."/>
            <person name="Holroyd S."/>
            <person name="Hornsby T."/>
            <person name="Jagels K."/>
            <person name="Krogh A."/>
            <person name="McLean J."/>
            <person name="Moule S."/>
            <person name="Murphy L.D."/>
            <person name="Oliver S."/>
            <person name="Osborne J."/>
            <person name="Quail M.A."/>
            <person name="Rajandream M.A."/>
            <person name="Rogers J."/>
            <person name="Rutter S."/>
            <person name="Seeger K."/>
            <person name="Skelton S."/>
            <person name="Squares S."/>
            <person name="Squares R."/>
            <person name="Sulston J.E."/>
            <person name="Taylor K."/>
            <person name="Whitehead S."/>
            <person name="Barrell B.G."/>
        </authorList>
    </citation>
    <scope>NUCLEOTIDE SEQUENCE [LARGE SCALE GENOMIC DNA]</scope>
    <source>
        <strain>ATCC 25618 / H37Rv</strain>
    </source>
</reference>
<reference key="2">
    <citation type="journal article" date="2007" name="FEBS Lett.">
        <title>Probing the nucleotide binding and phosphorylation by the histidine kinase of a novel three-protein two-component system from Mycobacterium tuberculosis.</title>
        <authorList>
            <person name="Shrivastava R."/>
            <person name="Ghosh A.K."/>
            <person name="Das A.K."/>
        </authorList>
    </citation>
    <scope>FUNCTION</scope>
    <source>
        <strain>ATCC 25618 / H37Rv</strain>
    </source>
</reference>
<reference key="3">
    <citation type="journal article" date="2008" name="BMC Syst. Biol.">
        <title>targetTB: a target identification pipeline for Mycobacterium tuberculosis through an interactome, reactome and genome-scale structural analysis.</title>
        <authorList>
            <person name="Raman K."/>
            <person name="Yeturu K."/>
            <person name="Chandra N."/>
        </authorList>
    </citation>
    <scope>IDENTIFICATION AS A DRUG TARGET [LARGE SCALE ANALYSIS]</scope>
</reference>
<reference key="4">
    <citation type="journal article" date="2009" name="Microbiology">
        <title>Intra- and intermolecular domain interactions among novel two-component system proteins coded by Rv0600c, Rv0601c and Rv0602c of Mycobacterium tuberculosis.</title>
        <authorList>
            <person name="Shrivastava R."/>
            <person name="Ghosh A.K."/>
            <person name="Das A.K."/>
        </authorList>
    </citation>
    <scope>INTERACTION WITH HK2</scope>
    <source>
        <strain>ATCC 25618 / H37Rv</strain>
    </source>
</reference>
<reference key="5">
    <citation type="journal article" date="2011" name="Mol. Cell. Proteomics">
        <title>Proteogenomic analysis of Mycobacterium tuberculosis by high resolution mass spectrometry.</title>
        <authorList>
            <person name="Kelkar D.S."/>
            <person name="Kumar D."/>
            <person name="Kumar P."/>
            <person name="Balakrishnan L."/>
            <person name="Muthusamy B."/>
            <person name="Yadav A.K."/>
            <person name="Shrivastava P."/>
            <person name="Marimuthu A."/>
            <person name="Anand S."/>
            <person name="Sundaram H."/>
            <person name="Kingsbury R."/>
            <person name="Harsha H.C."/>
            <person name="Nair B."/>
            <person name="Prasad T.S."/>
            <person name="Chauhan D.S."/>
            <person name="Katoch K."/>
            <person name="Katoch V.M."/>
            <person name="Kumar P."/>
            <person name="Chaerkady R."/>
            <person name="Ramachandran S."/>
            <person name="Dash D."/>
            <person name="Pandey A."/>
        </authorList>
    </citation>
    <scope>IDENTIFICATION BY MASS SPECTROMETRY [LARGE SCALE ANALYSIS]</scope>
    <source>
        <strain>ATCC 25618 / H37Rv</strain>
    </source>
</reference>
<gene>
    <name type="primary">tcrA</name>
    <name type="ordered locus">Rv0602c</name>
</gene>
<keyword id="KW-0963">Cytoplasm</keyword>
<keyword id="KW-0238">DNA-binding</keyword>
<keyword id="KW-0597">Phosphoprotein</keyword>
<keyword id="KW-1185">Reference proteome</keyword>
<keyword id="KW-0804">Transcription</keyword>
<keyword id="KW-0805">Transcription regulation</keyword>
<keyword id="KW-0902">Two-component regulatory system</keyword>
<comment type="function">
    <text evidence="3">Member of the three-protein two-component system HK1/HK2/TcrA.</text>
</comment>
<comment type="subunit">
    <text evidence="4">Interacts with HK2.</text>
</comment>
<comment type="subcellular location">
    <subcellularLocation>
        <location evidence="5">Cytoplasm</location>
    </subcellularLocation>
</comment>
<comment type="PTM">
    <text>Phosphorylated by HK2.</text>
</comment>
<comment type="miscellaneous">
    <text>Was identified as a high-confidence drug target.</text>
</comment>
<accession>O07776</accession>
<accession>L0T499</accession>
<dbReference type="EMBL" id="AL123456">
    <property type="protein sequence ID" value="CCP43341.1"/>
    <property type="molecule type" value="Genomic_DNA"/>
</dbReference>
<dbReference type="PIR" id="E70909">
    <property type="entry name" value="E70909"/>
</dbReference>
<dbReference type="RefSeq" id="NP_215116.1">
    <property type="nucleotide sequence ID" value="NC_000962.3"/>
</dbReference>
<dbReference type="RefSeq" id="WP_003403148.1">
    <property type="nucleotide sequence ID" value="NC_000962.3"/>
</dbReference>
<dbReference type="SMR" id="O07776"/>
<dbReference type="FunCoup" id="O07776">
    <property type="interactions" value="10"/>
</dbReference>
<dbReference type="STRING" id="83332.Rv0602c"/>
<dbReference type="PaxDb" id="83332-Rv0602c"/>
<dbReference type="DNASU" id="887870"/>
<dbReference type="GeneID" id="887870"/>
<dbReference type="KEGG" id="mtu:Rv0602c"/>
<dbReference type="KEGG" id="mtv:RVBD_0602c"/>
<dbReference type="TubercuList" id="Rv0602c"/>
<dbReference type="eggNOG" id="COG0745">
    <property type="taxonomic scope" value="Bacteria"/>
</dbReference>
<dbReference type="InParanoid" id="O07776"/>
<dbReference type="OrthoDB" id="5242569at2"/>
<dbReference type="PhylomeDB" id="O07776"/>
<dbReference type="Proteomes" id="UP000001584">
    <property type="component" value="Chromosome"/>
</dbReference>
<dbReference type="GO" id="GO:0005829">
    <property type="term" value="C:cytosol"/>
    <property type="evidence" value="ECO:0000318"/>
    <property type="project" value="GO_Central"/>
</dbReference>
<dbReference type="GO" id="GO:0005886">
    <property type="term" value="C:plasma membrane"/>
    <property type="evidence" value="ECO:0007005"/>
    <property type="project" value="MTBBASE"/>
</dbReference>
<dbReference type="GO" id="GO:0032993">
    <property type="term" value="C:protein-DNA complex"/>
    <property type="evidence" value="ECO:0000318"/>
    <property type="project" value="GO_Central"/>
</dbReference>
<dbReference type="GO" id="GO:0000156">
    <property type="term" value="F:phosphorelay response regulator activity"/>
    <property type="evidence" value="ECO:0000314"/>
    <property type="project" value="MTBBASE"/>
</dbReference>
<dbReference type="GO" id="GO:0000976">
    <property type="term" value="F:transcription cis-regulatory region binding"/>
    <property type="evidence" value="ECO:0000318"/>
    <property type="project" value="GO_Central"/>
</dbReference>
<dbReference type="GO" id="GO:0070298">
    <property type="term" value="P:negative regulation of phosphorelay signal transduction system"/>
    <property type="evidence" value="ECO:0000314"/>
    <property type="project" value="MTBBASE"/>
</dbReference>
<dbReference type="GO" id="GO:0006355">
    <property type="term" value="P:regulation of DNA-templated transcription"/>
    <property type="evidence" value="ECO:0000318"/>
    <property type="project" value="GO_Central"/>
</dbReference>
<dbReference type="CDD" id="cd00383">
    <property type="entry name" value="trans_reg_C"/>
    <property type="match status" value="1"/>
</dbReference>
<dbReference type="FunFam" id="3.40.50.2300:FF:000001">
    <property type="entry name" value="DNA-binding response regulator PhoB"/>
    <property type="match status" value="1"/>
</dbReference>
<dbReference type="FunFam" id="1.10.10.10:FF:000005">
    <property type="entry name" value="Two-component system response regulator"/>
    <property type="match status" value="1"/>
</dbReference>
<dbReference type="Gene3D" id="3.40.50.2300">
    <property type="match status" value="1"/>
</dbReference>
<dbReference type="Gene3D" id="6.10.250.690">
    <property type="match status" value="1"/>
</dbReference>
<dbReference type="Gene3D" id="1.10.10.10">
    <property type="entry name" value="Winged helix-like DNA-binding domain superfamily/Winged helix DNA-binding domain"/>
    <property type="match status" value="1"/>
</dbReference>
<dbReference type="InterPro" id="IPR011006">
    <property type="entry name" value="CheY-like_superfamily"/>
</dbReference>
<dbReference type="InterPro" id="IPR001867">
    <property type="entry name" value="OmpR/PhoB-type_DNA-bd"/>
</dbReference>
<dbReference type="InterPro" id="IPR001789">
    <property type="entry name" value="Sig_transdc_resp-reg_receiver"/>
</dbReference>
<dbReference type="InterPro" id="IPR039420">
    <property type="entry name" value="WalR-like"/>
</dbReference>
<dbReference type="InterPro" id="IPR036388">
    <property type="entry name" value="WH-like_DNA-bd_sf"/>
</dbReference>
<dbReference type="PANTHER" id="PTHR48111">
    <property type="entry name" value="REGULATOR OF RPOS"/>
    <property type="match status" value="1"/>
</dbReference>
<dbReference type="PANTHER" id="PTHR48111:SF28">
    <property type="entry name" value="TRANSCRIPTIONAL REGULATORY PROTEIN TCRX-RELATED"/>
    <property type="match status" value="1"/>
</dbReference>
<dbReference type="Pfam" id="PF00072">
    <property type="entry name" value="Response_reg"/>
    <property type="match status" value="1"/>
</dbReference>
<dbReference type="Pfam" id="PF00486">
    <property type="entry name" value="Trans_reg_C"/>
    <property type="match status" value="1"/>
</dbReference>
<dbReference type="SMART" id="SM00448">
    <property type="entry name" value="REC"/>
    <property type="match status" value="1"/>
</dbReference>
<dbReference type="SMART" id="SM00862">
    <property type="entry name" value="Trans_reg_C"/>
    <property type="match status" value="1"/>
</dbReference>
<dbReference type="SUPFAM" id="SSF52172">
    <property type="entry name" value="CheY-like"/>
    <property type="match status" value="1"/>
</dbReference>
<dbReference type="PROSITE" id="PS51755">
    <property type="entry name" value="OMPR_PHOB"/>
    <property type="match status" value="1"/>
</dbReference>
<dbReference type="PROSITE" id="PS50110">
    <property type="entry name" value="RESPONSE_REGULATORY"/>
    <property type="match status" value="1"/>
</dbReference>
<name>TCRA1_MYCTU</name>
<protein>
    <recommendedName>
        <fullName>Transcriptional regulatory protein TcrA</fullName>
    </recommendedName>
</protein>
<organism>
    <name type="scientific">Mycobacterium tuberculosis (strain ATCC 25618 / H37Rv)</name>
    <dbReference type="NCBI Taxonomy" id="83332"/>
    <lineage>
        <taxon>Bacteria</taxon>
        <taxon>Bacillati</taxon>
        <taxon>Actinomycetota</taxon>
        <taxon>Actinomycetes</taxon>
        <taxon>Mycobacteriales</taxon>
        <taxon>Mycobacteriaceae</taxon>
        <taxon>Mycobacterium</taxon>
        <taxon>Mycobacterium tuberculosis complex</taxon>
    </lineage>
</organism>
<sequence length="253" mass="28170">MADETTMRAGRGPGRACGRVSGVRILVVEDEPKMTALLARALTEEGHTVDTVADGRHAVAAVDGGDYDAVVLDVMLPGIDGFEVCARLRRQRVWTPVLMLTARGAVTDRIAGLDGGADDYLTKPFNLDELFARLRALSRRGPIPRPPTLEAGDLRLDPSEHRVWRADTEIRLSHKEFTLLEALIRRPGIVHTRAQLLERCWDAAYEARSNIVDVYIRYLRDKIDRPFGVTSLETIRGAGYRLRKDGGRHALPR</sequence>
<evidence type="ECO:0000255" key="1">
    <source>
        <dbReference type="PROSITE-ProRule" id="PRU00169"/>
    </source>
</evidence>
<evidence type="ECO:0000255" key="2">
    <source>
        <dbReference type="PROSITE-ProRule" id="PRU01091"/>
    </source>
</evidence>
<evidence type="ECO:0000269" key="3">
    <source>
    </source>
</evidence>
<evidence type="ECO:0000269" key="4">
    <source>
    </source>
</evidence>
<evidence type="ECO:0000305" key="5"/>
<feature type="chain" id="PRO_0000391082" description="Transcriptional regulatory protein TcrA">
    <location>
        <begin position="1"/>
        <end position="253"/>
    </location>
</feature>
<feature type="domain" description="Response regulatory" evidence="1">
    <location>
        <begin position="24"/>
        <end position="138"/>
    </location>
</feature>
<feature type="DNA-binding region" description="OmpR/PhoB-type" evidence="2">
    <location>
        <begin position="146"/>
        <end position="244"/>
    </location>
</feature>
<feature type="modified residue" description="4-aspartylphosphate" evidence="1">
    <location>
        <position position="73"/>
    </location>
</feature>
<proteinExistence type="evidence at protein level"/>